<accession>B9M0L4</accession>
<proteinExistence type="inferred from homology"/>
<feature type="chain" id="PRO_1000192085" description="UDP-N-acetylglucosamine 1-carboxyvinyltransferase">
    <location>
        <begin position="1"/>
        <end position="417"/>
    </location>
</feature>
<feature type="active site" description="Proton donor" evidence="1">
    <location>
        <position position="116"/>
    </location>
</feature>
<feature type="binding site" evidence="1">
    <location>
        <begin position="22"/>
        <end position="23"/>
    </location>
    <ligand>
        <name>phosphoenolpyruvate</name>
        <dbReference type="ChEBI" id="CHEBI:58702"/>
    </ligand>
</feature>
<feature type="binding site" evidence="1">
    <location>
        <position position="92"/>
    </location>
    <ligand>
        <name>UDP-N-acetyl-alpha-D-glucosamine</name>
        <dbReference type="ChEBI" id="CHEBI:57705"/>
    </ligand>
</feature>
<feature type="binding site" evidence="1">
    <location>
        <position position="304"/>
    </location>
    <ligand>
        <name>UDP-N-acetyl-alpha-D-glucosamine</name>
        <dbReference type="ChEBI" id="CHEBI:57705"/>
    </ligand>
</feature>
<feature type="binding site" evidence="1">
    <location>
        <position position="326"/>
    </location>
    <ligand>
        <name>UDP-N-acetyl-alpha-D-glucosamine</name>
        <dbReference type="ChEBI" id="CHEBI:57705"/>
    </ligand>
</feature>
<feature type="modified residue" description="2-(S-cysteinyl)pyruvic acid O-phosphothioketal" evidence="1">
    <location>
        <position position="116"/>
    </location>
</feature>
<comment type="function">
    <text evidence="1">Cell wall formation. Adds enolpyruvyl to UDP-N-acetylglucosamine.</text>
</comment>
<comment type="catalytic activity">
    <reaction evidence="1">
        <text>phosphoenolpyruvate + UDP-N-acetyl-alpha-D-glucosamine = UDP-N-acetyl-3-O-(1-carboxyvinyl)-alpha-D-glucosamine + phosphate</text>
        <dbReference type="Rhea" id="RHEA:18681"/>
        <dbReference type="ChEBI" id="CHEBI:43474"/>
        <dbReference type="ChEBI" id="CHEBI:57705"/>
        <dbReference type="ChEBI" id="CHEBI:58702"/>
        <dbReference type="ChEBI" id="CHEBI:68483"/>
        <dbReference type="EC" id="2.5.1.7"/>
    </reaction>
</comment>
<comment type="pathway">
    <text evidence="1">Cell wall biogenesis; peptidoglycan biosynthesis.</text>
</comment>
<comment type="subcellular location">
    <subcellularLocation>
        <location evidence="1">Cytoplasm</location>
    </subcellularLocation>
</comment>
<comment type="similarity">
    <text evidence="1">Belongs to the EPSP synthase family. MurA subfamily.</text>
</comment>
<keyword id="KW-0131">Cell cycle</keyword>
<keyword id="KW-0132">Cell division</keyword>
<keyword id="KW-0133">Cell shape</keyword>
<keyword id="KW-0961">Cell wall biogenesis/degradation</keyword>
<keyword id="KW-0963">Cytoplasm</keyword>
<keyword id="KW-0573">Peptidoglycan synthesis</keyword>
<keyword id="KW-0670">Pyruvate</keyword>
<keyword id="KW-1185">Reference proteome</keyword>
<keyword id="KW-0808">Transferase</keyword>
<dbReference type="EC" id="2.5.1.7" evidence="1"/>
<dbReference type="EMBL" id="CP001390">
    <property type="protein sequence ID" value="ACM19051.1"/>
    <property type="molecule type" value="Genomic_DNA"/>
</dbReference>
<dbReference type="RefSeq" id="WP_012645780.1">
    <property type="nucleotide sequence ID" value="NC_011979.1"/>
</dbReference>
<dbReference type="SMR" id="B9M0L4"/>
<dbReference type="STRING" id="316067.Geob_0687"/>
<dbReference type="KEGG" id="geo:Geob_0687"/>
<dbReference type="eggNOG" id="COG0766">
    <property type="taxonomic scope" value="Bacteria"/>
</dbReference>
<dbReference type="HOGENOM" id="CLU_027387_0_0_7"/>
<dbReference type="OrthoDB" id="9803760at2"/>
<dbReference type="UniPathway" id="UPA00219"/>
<dbReference type="Proteomes" id="UP000007721">
    <property type="component" value="Chromosome"/>
</dbReference>
<dbReference type="GO" id="GO:0005737">
    <property type="term" value="C:cytoplasm"/>
    <property type="evidence" value="ECO:0007669"/>
    <property type="project" value="UniProtKB-SubCell"/>
</dbReference>
<dbReference type="GO" id="GO:0008760">
    <property type="term" value="F:UDP-N-acetylglucosamine 1-carboxyvinyltransferase activity"/>
    <property type="evidence" value="ECO:0007669"/>
    <property type="project" value="UniProtKB-UniRule"/>
</dbReference>
<dbReference type="GO" id="GO:0051301">
    <property type="term" value="P:cell division"/>
    <property type="evidence" value="ECO:0007669"/>
    <property type="project" value="UniProtKB-KW"/>
</dbReference>
<dbReference type="GO" id="GO:0071555">
    <property type="term" value="P:cell wall organization"/>
    <property type="evidence" value="ECO:0007669"/>
    <property type="project" value="UniProtKB-KW"/>
</dbReference>
<dbReference type="GO" id="GO:0009252">
    <property type="term" value="P:peptidoglycan biosynthetic process"/>
    <property type="evidence" value="ECO:0007669"/>
    <property type="project" value="UniProtKB-UniRule"/>
</dbReference>
<dbReference type="GO" id="GO:0008360">
    <property type="term" value="P:regulation of cell shape"/>
    <property type="evidence" value="ECO:0007669"/>
    <property type="project" value="UniProtKB-KW"/>
</dbReference>
<dbReference type="GO" id="GO:0019277">
    <property type="term" value="P:UDP-N-acetylgalactosamine biosynthetic process"/>
    <property type="evidence" value="ECO:0007669"/>
    <property type="project" value="InterPro"/>
</dbReference>
<dbReference type="CDD" id="cd01555">
    <property type="entry name" value="UdpNAET"/>
    <property type="match status" value="1"/>
</dbReference>
<dbReference type="FunFam" id="3.65.10.10:FF:000001">
    <property type="entry name" value="UDP-N-acetylglucosamine 1-carboxyvinyltransferase"/>
    <property type="match status" value="1"/>
</dbReference>
<dbReference type="Gene3D" id="3.65.10.10">
    <property type="entry name" value="Enolpyruvate transferase domain"/>
    <property type="match status" value="2"/>
</dbReference>
<dbReference type="HAMAP" id="MF_00111">
    <property type="entry name" value="MurA"/>
    <property type="match status" value="1"/>
</dbReference>
<dbReference type="InterPro" id="IPR001986">
    <property type="entry name" value="Enolpyruvate_Tfrase_dom"/>
</dbReference>
<dbReference type="InterPro" id="IPR036968">
    <property type="entry name" value="Enolpyruvate_Tfrase_sf"/>
</dbReference>
<dbReference type="InterPro" id="IPR050068">
    <property type="entry name" value="MurA_subfamily"/>
</dbReference>
<dbReference type="InterPro" id="IPR013792">
    <property type="entry name" value="RNA3'P_cycl/enolpyr_Trfase_a/b"/>
</dbReference>
<dbReference type="InterPro" id="IPR005750">
    <property type="entry name" value="UDP_GlcNAc_COvinyl_MurA"/>
</dbReference>
<dbReference type="NCBIfam" id="TIGR01072">
    <property type="entry name" value="murA"/>
    <property type="match status" value="1"/>
</dbReference>
<dbReference type="NCBIfam" id="NF006873">
    <property type="entry name" value="PRK09369.1"/>
    <property type="match status" value="1"/>
</dbReference>
<dbReference type="PANTHER" id="PTHR43783">
    <property type="entry name" value="UDP-N-ACETYLGLUCOSAMINE 1-CARBOXYVINYLTRANSFERASE"/>
    <property type="match status" value="1"/>
</dbReference>
<dbReference type="PANTHER" id="PTHR43783:SF1">
    <property type="entry name" value="UDP-N-ACETYLGLUCOSAMINE 1-CARBOXYVINYLTRANSFERASE"/>
    <property type="match status" value="1"/>
</dbReference>
<dbReference type="Pfam" id="PF00275">
    <property type="entry name" value="EPSP_synthase"/>
    <property type="match status" value="1"/>
</dbReference>
<dbReference type="SUPFAM" id="SSF55205">
    <property type="entry name" value="EPT/RTPC-like"/>
    <property type="match status" value="1"/>
</dbReference>
<organism>
    <name type="scientific">Geotalea daltonii (strain DSM 22248 / JCM 15807 / FRC-32)</name>
    <name type="common">Geobacter daltonii</name>
    <dbReference type="NCBI Taxonomy" id="316067"/>
    <lineage>
        <taxon>Bacteria</taxon>
        <taxon>Pseudomonadati</taxon>
        <taxon>Thermodesulfobacteriota</taxon>
        <taxon>Desulfuromonadia</taxon>
        <taxon>Geobacterales</taxon>
        <taxon>Geobacteraceae</taxon>
        <taxon>Geotalea</taxon>
    </lineage>
</organism>
<name>MURA_GEODF</name>
<gene>
    <name evidence="1" type="primary">murA</name>
    <name type="ordered locus">Geob_0687</name>
</gene>
<sequence length="417" mass="44726">MDKLIIKGGKKLSGEVTVSGSKNASLPVFVSTILAPAEHEFSNVPFLRDINTTIKVMEQLGAKIEGNGNVVRIDTRGIDKHEATYDLVKTMRASVLVLGPLLSRFGIARVSLPGGCAIGARPINLHLKGLAAMGADITLSHGYVEAKAKQLKGARINFDVSTVGGTEHLMMAAATAKGETILENAAREPEIVDLANVLIKMGARIDGAGTDTIRIDGVKELGPVTHRMMPDRIEAGTFMIAAAITGGDVKIRNMQLEHLDALVFKLQDAGVEIINKDNVVRVKGPKKVRSVNIKTRPYPGFPTDMQAQFMALMCLADGASVISENIFENRFMHVSELMRFGADITTEGNAATVKGVKKLSGAPVMATDLRASASLILAGLASDNTTEISRIYHLDRGYEFIEKKLAGLGADIERVQE</sequence>
<reference key="1">
    <citation type="submission" date="2009-01" db="EMBL/GenBank/DDBJ databases">
        <title>Complete sequence of Geobacter sp. FRC-32.</title>
        <authorList>
            <consortium name="US DOE Joint Genome Institute"/>
            <person name="Lucas S."/>
            <person name="Copeland A."/>
            <person name="Lapidus A."/>
            <person name="Glavina del Rio T."/>
            <person name="Dalin E."/>
            <person name="Tice H."/>
            <person name="Bruce D."/>
            <person name="Goodwin L."/>
            <person name="Pitluck S."/>
            <person name="Saunders E."/>
            <person name="Brettin T."/>
            <person name="Detter J.C."/>
            <person name="Han C."/>
            <person name="Larimer F."/>
            <person name="Land M."/>
            <person name="Hauser L."/>
            <person name="Kyrpides N."/>
            <person name="Ovchinnikova G."/>
            <person name="Kostka J."/>
            <person name="Richardson P."/>
        </authorList>
    </citation>
    <scope>NUCLEOTIDE SEQUENCE [LARGE SCALE GENOMIC DNA]</scope>
    <source>
        <strain>DSM 22248 / JCM 15807 / FRC-32</strain>
    </source>
</reference>
<protein>
    <recommendedName>
        <fullName evidence="1">UDP-N-acetylglucosamine 1-carboxyvinyltransferase</fullName>
        <ecNumber evidence="1">2.5.1.7</ecNumber>
    </recommendedName>
    <alternativeName>
        <fullName evidence="1">Enoylpyruvate transferase</fullName>
    </alternativeName>
    <alternativeName>
        <fullName evidence="1">UDP-N-acetylglucosamine enolpyruvyl transferase</fullName>
        <shortName evidence="1">EPT</shortName>
    </alternativeName>
</protein>
<evidence type="ECO:0000255" key="1">
    <source>
        <dbReference type="HAMAP-Rule" id="MF_00111"/>
    </source>
</evidence>